<sequence>MFVYYCKECFIMNKQQSKVRYSIRKVSIGILSISIGMFLALGMSNKAYADEIDKSKDFTRGYEQNVFAKSELNANKNTTKDKIKNEGAVKTSDTSLKLDNKSAISNGNEINQDIKISNTPKNSSQGNNLVINNNEPTKEIKIANLEAQNSNQKKTNKVTNNYFGYYSFREAPKTQIYTVKKGDTLSAIALKYKTTVSNIQNTNNIANPNLIFIGQKLKVPMTPLVEPKPKTVSSNNKSNSNSSTLNYLKTLENRGWDFDGSYGWQCFDLVNVYWNHLYGHGLKGYGAKDIPYANNFNSEAKIYHNTPTFKAEPGDLVVFSGRFGGGYGHTAIVLNGDYDGKLMKFQSLDQNWNNGGWRKAEVAHKVVHNYENDMIFIRPFKKA</sequence>
<protein>
    <recommendedName>
        <fullName>Probable cell wall hydrolase LytN</fullName>
        <ecNumber>3.-.-.-</ecNumber>
    </recommendedName>
</protein>
<keyword id="KW-0961">Cell wall biogenesis/degradation</keyword>
<keyword id="KW-0378">Hydrolase</keyword>
<keyword id="KW-0964">Secreted</keyword>
<keyword id="KW-0732">Signal</keyword>
<feature type="signal peptide" evidence="2">
    <location>
        <begin position="1"/>
        <end position="49"/>
    </location>
</feature>
<feature type="chain" id="PRO_0000227566" description="Probable cell wall hydrolase LytN">
    <location>
        <begin position="50"/>
        <end position="383"/>
    </location>
</feature>
<feature type="domain" description="LysM" evidence="4">
    <location>
        <begin position="175"/>
        <end position="219"/>
    </location>
</feature>
<feature type="domain" description="Peptidase C51" evidence="3">
    <location>
        <begin position="241"/>
        <end position="378"/>
    </location>
</feature>
<comment type="function">
    <text evidence="1">Probably involved in peptidoglycan hydrolysis.</text>
</comment>
<comment type="subcellular location">
    <subcellularLocation>
        <location evidence="5">Secreted</location>
    </subcellularLocation>
</comment>
<comment type="sequence caution" evidence="5">
    <conflict type="erroneous initiation">
        <sequence resource="EMBL-CDS" id="BAB94995"/>
    </conflict>
</comment>
<proteinExistence type="inferred from homology"/>
<organism>
    <name type="scientific">Staphylococcus aureus (strain MW2)</name>
    <dbReference type="NCBI Taxonomy" id="196620"/>
    <lineage>
        <taxon>Bacteria</taxon>
        <taxon>Bacillati</taxon>
        <taxon>Bacillota</taxon>
        <taxon>Bacilli</taxon>
        <taxon>Bacillales</taxon>
        <taxon>Staphylococcaceae</taxon>
        <taxon>Staphylococcus</taxon>
    </lineage>
</organism>
<gene>
    <name type="primary">lytN</name>
    <name type="ordered locus">MW1130</name>
</gene>
<name>LYTN_STAAW</name>
<evidence type="ECO:0000250" key="1"/>
<evidence type="ECO:0000255" key="2"/>
<evidence type="ECO:0000255" key="3">
    <source>
        <dbReference type="PROSITE-ProRule" id="PRU00048"/>
    </source>
</evidence>
<evidence type="ECO:0000255" key="4">
    <source>
        <dbReference type="PROSITE-ProRule" id="PRU01118"/>
    </source>
</evidence>
<evidence type="ECO:0000305" key="5"/>
<reference key="1">
    <citation type="journal article" date="2002" name="Lancet">
        <title>Genome and virulence determinants of high virulence community-acquired MRSA.</title>
        <authorList>
            <person name="Baba T."/>
            <person name="Takeuchi F."/>
            <person name="Kuroda M."/>
            <person name="Yuzawa H."/>
            <person name="Aoki K."/>
            <person name="Oguchi A."/>
            <person name="Nagai Y."/>
            <person name="Iwama N."/>
            <person name="Asano K."/>
            <person name="Naimi T."/>
            <person name="Kuroda H."/>
            <person name="Cui L."/>
            <person name="Yamamoto K."/>
            <person name="Hiramatsu K."/>
        </authorList>
    </citation>
    <scope>NUCLEOTIDE SEQUENCE [LARGE SCALE GENOMIC DNA]</scope>
    <source>
        <strain>MW2</strain>
    </source>
</reference>
<dbReference type="EC" id="3.-.-.-"/>
<dbReference type="EMBL" id="BA000033">
    <property type="protein sequence ID" value="BAB94995.1"/>
    <property type="status" value="ALT_INIT"/>
    <property type="molecule type" value="Genomic_DNA"/>
</dbReference>
<dbReference type="SMR" id="Q7A123"/>
<dbReference type="CAZy" id="CBM50">
    <property type="family name" value="Carbohydrate-Binding Module Family 50"/>
</dbReference>
<dbReference type="KEGG" id="sam:MW1130"/>
<dbReference type="HOGENOM" id="CLU_060961_0_0_9"/>
<dbReference type="GO" id="GO:0005576">
    <property type="term" value="C:extracellular region"/>
    <property type="evidence" value="ECO:0007669"/>
    <property type="project" value="UniProtKB-SubCell"/>
</dbReference>
<dbReference type="GO" id="GO:0016787">
    <property type="term" value="F:hydrolase activity"/>
    <property type="evidence" value="ECO:0007669"/>
    <property type="project" value="UniProtKB-KW"/>
</dbReference>
<dbReference type="GO" id="GO:0008932">
    <property type="term" value="F:lytic endotransglycosylase activity"/>
    <property type="evidence" value="ECO:0007669"/>
    <property type="project" value="TreeGrafter"/>
</dbReference>
<dbReference type="GO" id="GO:0071555">
    <property type="term" value="P:cell wall organization"/>
    <property type="evidence" value="ECO:0007669"/>
    <property type="project" value="UniProtKB-KW"/>
</dbReference>
<dbReference type="CDD" id="cd00118">
    <property type="entry name" value="LysM"/>
    <property type="match status" value="1"/>
</dbReference>
<dbReference type="FunFam" id="3.10.350.10:FF:000021">
    <property type="entry name" value="Probable cell wall hydrolase LytN"/>
    <property type="match status" value="1"/>
</dbReference>
<dbReference type="FunFam" id="3.90.1720.10:FF:000015">
    <property type="entry name" value="Probable cell wall hydrolase LytN"/>
    <property type="match status" value="1"/>
</dbReference>
<dbReference type="Gene3D" id="3.90.1720.10">
    <property type="entry name" value="endopeptidase domain like (from Nostoc punctiforme)"/>
    <property type="match status" value="1"/>
</dbReference>
<dbReference type="Gene3D" id="3.10.350.10">
    <property type="entry name" value="LysM domain"/>
    <property type="match status" value="1"/>
</dbReference>
<dbReference type="InterPro" id="IPR007921">
    <property type="entry name" value="CHAP_dom"/>
</dbReference>
<dbReference type="InterPro" id="IPR018392">
    <property type="entry name" value="LysM_dom"/>
</dbReference>
<dbReference type="InterPro" id="IPR036779">
    <property type="entry name" value="LysM_dom_sf"/>
</dbReference>
<dbReference type="InterPro" id="IPR038765">
    <property type="entry name" value="Papain-like_cys_pep_sf"/>
</dbReference>
<dbReference type="InterPro" id="IPR005877">
    <property type="entry name" value="YSIRK_signal_dom"/>
</dbReference>
<dbReference type="NCBIfam" id="TIGR01168">
    <property type="entry name" value="YSIRK_signal"/>
    <property type="match status" value="1"/>
</dbReference>
<dbReference type="PANTHER" id="PTHR33734">
    <property type="entry name" value="LYSM DOMAIN-CONTAINING GPI-ANCHORED PROTEIN 2"/>
    <property type="match status" value="1"/>
</dbReference>
<dbReference type="PANTHER" id="PTHR33734:SF22">
    <property type="entry name" value="MEMBRANE-BOUND LYTIC MUREIN TRANSGLYCOSYLASE D"/>
    <property type="match status" value="1"/>
</dbReference>
<dbReference type="Pfam" id="PF05257">
    <property type="entry name" value="CHAP"/>
    <property type="match status" value="1"/>
</dbReference>
<dbReference type="Pfam" id="PF01476">
    <property type="entry name" value="LysM"/>
    <property type="match status" value="1"/>
</dbReference>
<dbReference type="SMART" id="SM00257">
    <property type="entry name" value="LysM"/>
    <property type="match status" value="1"/>
</dbReference>
<dbReference type="SUPFAM" id="SSF54001">
    <property type="entry name" value="Cysteine proteinases"/>
    <property type="match status" value="1"/>
</dbReference>
<dbReference type="SUPFAM" id="SSF54106">
    <property type="entry name" value="LysM domain"/>
    <property type="match status" value="1"/>
</dbReference>
<dbReference type="PROSITE" id="PS50911">
    <property type="entry name" value="CHAP"/>
    <property type="match status" value="1"/>
</dbReference>
<dbReference type="PROSITE" id="PS51782">
    <property type="entry name" value="LYSM"/>
    <property type="match status" value="1"/>
</dbReference>
<accession>Q7A123</accession>